<organism>
    <name type="scientific">Staphylococcus aureus (strain MRSA252)</name>
    <dbReference type="NCBI Taxonomy" id="282458"/>
    <lineage>
        <taxon>Bacteria</taxon>
        <taxon>Bacillati</taxon>
        <taxon>Bacillota</taxon>
        <taxon>Bacilli</taxon>
        <taxon>Bacillales</taxon>
        <taxon>Staphylococcaceae</taxon>
        <taxon>Staphylococcus</taxon>
    </lineage>
</organism>
<gene>
    <name type="ordered locus">SAR0985</name>
</gene>
<protein>
    <recommendedName>
        <fullName evidence="1">Putative phosphoesterase SAR0985</fullName>
        <ecNumber evidence="1">3.1.-.-</ecNumber>
    </recommendedName>
</protein>
<feature type="chain" id="PRO_0000299339" description="Putative phosphoesterase SAR0985">
    <location>
        <begin position="1"/>
        <end position="169"/>
    </location>
</feature>
<feature type="short sequence motif" description="HXTX 1" evidence="1">
    <location>
        <begin position="34"/>
        <end position="37"/>
    </location>
</feature>
<feature type="short sequence motif" description="HXTX 2" evidence="1">
    <location>
        <begin position="115"/>
        <end position="118"/>
    </location>
</feature>
<feature type="active site" description="Proton donor" evidence="1">
    <location>
        <position position="34"/>
    </location>
</feature>
<feature type="active site" description="Proton acceptor" evidence="1">
    <location>
        <position position="115"/>
    </location>
</feature>
<dbReference type="EC" id="3.1.-.-" evidence="1"/>
<dbReference type="EMBL" id="BX571856">
    <property type="protein sequence ID" value="CAG39990.1"/>
    <property type="molecule type" value="Genomic_DNA"/>
</dbReference>
<dbReference type="RefSeq" id="WP_000600387.1">
    <property type="nucleotide sequence ID" value="NC_002952.2"/>
</dbReference>
<dbReference type="SMR" id="Q6GI69"/>
<dbReference type="KEGG" id="sar:SAR0985"/>
<dbReference type="HOGENOM" id="CLU_132020_0_0_9"/>
<dbReference type="Proteomes" id="UP000000596">
    <property type="component" value="Chromosome"/>
</dbReference>
<dbReference type="GO" id="GO:0016788">
    <property type="term" value="F:hydrolase activity, acting on ester bonds"/>
    <property type="evidence" value="ECO:0007669"/>
    <property type="project" value="UniProtKB-UniRule"/>
</dbReference>
<dbReference type="Gene3D" id="3.90.1140.10">
    <property type="entry name" value="Cyclic phosphodiesterase"/>
    <property type="match status" value="1"/>
</dbReference>
<dbReference type="HAMAP" id="MF_01444">
    <property type="entry name" value="2H_phosphoesterase_YjcG"/>
    <property type="match status" value="1"/>
</dbReference>
<dbReference type="InterPro" id="IPR050580">
    <property type="entry name" value="2H_phosphoesterase_YjcG-like"/>
</dbReference>
<dbReference type="InterPro" id="IPR009097">
    <property type="entry name" value="Cyclic_Pdiesterase"/>
</dbReference>
<dbReference type="InterPro" id="IPR022932">
    <property type="entry name" value="YjcG"/>
</dbReference>
<dbReference type="NCBIfam" id="NF010223">
    <property type="entry name" value="PRK13679.1"/>
    <property type="match status" value="1"/>
</dbReference>
<dbReference type="PANTHER" id="PTHR40037:SF1">
    <property type="entry name" value="PHOSPHOESTERASE SAOUHSC_00951-RELATED"/>
    <property type="match status" value="1"/>
</dbReference>
<dbReference type="PANTHER" id="PTHR40037">
    <property type="entry name" value="PHOSPHOESTERASE YJCG-RELATED"/>
    <property type="match status" value="1"/>
</dbReference>
<dbReference type="Pfam" id="PF13563">
    <property type="entry name" value="2_5_RNA_ligase2"/>
    <property type="match status" value="1"/>
</dbReference>
<dbReference type="SUPFAM" id="SSF55144">
    <property type="entry name" value="LigT-like"/>
    <property type="match status" value="1"/>
</dbReference>
<accession>Q6GI69</accession>
<keyword id="KW-0378">Hydrolase</keyword>
<name>Y985_STAAR</name>
<sequence>MILGLALIPSKSFQEAVDSYRKRYDKQYSRIKPHVTIKAPFEIEDGDLDSVIEQVRARINGIPAVEVHATKASSFKPTNNVIYFKVAKTDDLEELFNRFNGEDFYGEAEHVFVPHFTIAQGLSSQEFEDIFGQVALAGVDHKEIIDELTLLRFDDDEDKWKVIETFKLA</sequence>
<evidence type="ECO:0000255" key="1">
    <source>
        <dbReference type="HAMAP-Rule" id="MF_01444"/>
    </source>
</evidence>
<reference key="1">
    <citation type="journal article" date="2004" name="Proc. Natl. Acad. Sci. U.S.A.">
        <title>Complete genomes of two clinical Staphylococcus aureus strains: evidence for the rapid evolution of virulence and drug resistance.</title>
        <authorList>
            <person name="Holden M.T.G."/>
            <person name="Feil E.J."/>
            <person name="Lindsay J.A."/>
            <person name="Peacock S.J."/>
            <person name="Day N.P.J."/>
            <person name="Enright M.C."/>
            <person name="Foster T.J."/>
            <person name="Moore C.E."/>
            <person name="Hurst L."/>
            <person name="Atkin R."/>
            <person name="Barron A."/>
            <person name="Bason N."/>
            <person name="Bentley S.D."/>
            <person name="Chillingworth C."/>
            <person name="Chillingworth T."/>
            <person name="Churcher C."/>
            <person name="Clark L."/>
            <person name="Corton C."/>
            <person name="Cronin A."/>
            <person name="Doggett J."/>
            <person name="Dowd L."/>
            <person name="Feltwell T."/>
            <person name="Hance Z."/>
            <person name="Harris B."/>
            <person name="Hauser H."/>
            <person name="Holroyd S."/>
            <person name="Jagels K."/>
            <person name="James K.D."/>
            <person name="Lennard N."/>
            <person name="Line A."/>
            <person name="Mayes R."/>
            <person name="Moule S."/>
            <person name="Mungall K."/>
            <person name="Ormond D."/>
            <person name="Quail M.A."/>
            <person name="Rabbinowitsch E."/>
            <person name="Rutherford K.M."/>
            <person name="Sanders M."/>
            <person name="Sharp S."/>
            <person name="Simmonds M."/>
            <person name="Stevens K."/>
            <person name="Whitehead S."/>
            <person name="Barrell B.G."/>
            <person name="Spratt B.G."/>
            <person name="Parkhill J."/>
        </authorList>
    </citation>
    <scope>NUCLEOTIDE SEQUENCE [LARGE SCALE GENOMIC DNA]</scope>
    <source>
        <strain>MRSA252</strain>
    </source>
</reference>
<comment type="similarity">
    <text evidence="1">Belongs to the 2H phosphoesterase superfamily. YjcG family.</text>
</comment>
<proteinExistence type="inferred from homology"/>